<gene>
    <name type="primary">HBB</name>
</gene>
<accession>P02090</accession>
<evidence type="ECO:0000250" key="1">
    <source>
        <dbReference type="UniProtKB" id="P02086"/>
    </source>
</evidence>
<evidence type="ECO:0000250" key="2">
    <source>
        <dbReference type="UniProtKB" id="P68871"/>
    </source>
</evidence>
<evidence type="ECO:0000255" key="3">
    <source>
        <dbReference type="PROSITE-ProRule" id="PRU00238"/>
    </source>
</evidence>
<name>HBB_SPAEH</name>
<proteinExistence type="evidence at protein level"/>
<sequence length="146" mass="15784">VHLTDAEKAAVSGLWSKVNVDEIGGEALGRLLVVYPWTQRFFDSFGDLSSPSAVMSNPKVKAHGKKVLNSFSEGLKHLDNLKGTFSSLSELHCDKLHVDPENFKLLGNVIVVVLAHHLGKDFTPAAQAAFQKVVAGVATALAHKYH</sequence>
<feature type="chain" id="PRO_0000053110" description="Hemoglobin subunit beta">
    <location>
        <begin position="1"/>
        <end position="146"/>
    </location>
</feature>
<feature type="domain" description="Globin" evidence="3">
    <location>
        <begin position="2"/>
        <end position="146"/>
    </location>
</feature>
<feature type="binding site" description="distal binding residue">
    <location>
        <position position="63"/>
    </location>
    <ligand>
        <name>heme b</name>
        <dbReference type="ChEBI" id="CHEBI:60344"/>
    </ligand>
    <ligandPart>
        <name>Fe</name>
        <dbReference type="ChEBI" id="CHEBI:18248"/>
    </ligandPart>
</feature>
<feature type="binding site" description="proximal binding residue">
    <location>
        <position position="92"/>
    </location>
    <ligand>
        <name>heme b</name>
        <dbReference type="ChEBI" id="CHEBI:60344"/>
    </ligand>
    <ligandPart>
        <name>Fe</name>
        <dbReference type="ChEBI" id="CHEBI:18248"/>
    </ligandPart>
</feature>
<feature type="modified residue" description="N-acetylvaline" evidence="1">
    <location>
        <position position="1"/>
    </location>
</feature>
<feature type="modified residue" description="Phosphoserine" evidence="2">
    <location>
        <position position="44"/>
    </location>
</feature>
<feature type="modified residue" description="N6-acetyllysine" evidence="2">
    <location>
        <position position="59"/>
    </location>
</feature>
<feature type="modified residue" description="N6-acetyllysine" evidence="2">
    <location>
        <position position="82"/>
    </location>
</feature>
<feature type="modified residue" description="S-nitrosocysteine" evidence="2">
    <location>
        <position position="93"/>
    </location>
</feature>
<feature type="modified residue" description="N6-acetyllysine" evidence="2">
    <location>
        <position position="144"/>
    </location>
</feature>
<keyword id="KW-0007">Acetylation</keyword>
<keyword id="KW-0903">Direct protein sequencing</keyword>
<keyword id="KW-0349">Heme</keyword>
<keyword id="KW-0408">Iron</keyword>
<keyword id="KW-0479">Metal-binding</keyword>
<keyword id="KW-0561">Oxygen transport</keyword>
<keyword id="KW-0597">Phosphoprotein</keyword>
<keyword id="KW-0702">S-nitrosylation</keyword>
<keyword id="KW-0813">Transport</keyword>
<reference key="1">
    <citation type="journal article" date="1984" name="Hoppe-Seyler's Z. Physiol. Chem.">
        <title>The primary structure of the hemoglobin of the mole rat (Spalax ehrenbergi, rodentia, chromosome species 60).</title>
        <authorList>
            <person name="Kleinschmidt T."/>
            <person name="Nevo E."/>
            <person name="Braunitzer G."/>
        </authorList>
    </citation>
    <scope>PROTEIN SEQUENCE (KARYOTYPE 2N=60)</scope>
</reference>
<reference key="2">
    <citation type="journal article" date="1985" name="Biol. Chem. Hoppe-Seyler">
        <title>Mole rat hemoglobin: primary structure and evolutionary aspects in a second karyotype of Spalax ehrenbergi, Rodentia, (2n = 52).</title>
        <authorList>
            <person name="Kleinschmidt T."/>
            <person name="Nevo E."/>
            <person name="Goodman M."/>
            <person name="Braunitzer G."/>
        </authorList>
    </citation>
    <scope>PROTEIN SEQUENCE (KARYOTYPE 2N=52)</scope>
</reference>
<protein>
    <recommendedName>
        <fullName>Hemoglobin subunit beta</fullName>
    </recommendedName>
    <alternativeName>
        <fullName>Beta-globin</fullName>
    </alternativeName>
    <alternativeName>
        <fullName>Hemoglobin beta chain</fullName>
    </alternativeName>
</protein>
<comment type="function">
    <text>Involved in oxygen transport from the lung to the various peripheral tissues.</text>
</comment>
<comment type="subunit">
    <text>Heterotetramer of two alpha chains and two beta chains.</text>
</comment>
<comment type="tissue specificity">
    <text>Red blood cells.</text>
</comment>
<comment type="similarity">
    <text evidence="3">Belongs to the globin family.</text>
</comment>
<organism>
    <name type="scientific">Spalax ehrenbergi</name>
    <name type="common">Middle East blind mole rat</name>
    <name type="synonym">Nannospalax ehrenbergi</name>
    <dbReference type="NCBI Taxonomy" id="30637"/>
    <lineage>
        <taxon>Eukaryota</taxon>
        <taxon>Metazoa</taxon>
        <taxon>Chordata</taxon>
        <taxon>Craniata</taxon>
        <taxon>Vertebrata</taxon>
        <taxon>Euteleostomi</taxon>
        <taxon>Mammalia</taxon>
        <taxon>Eutheria</taxon>
        <taxon>Euarchontoglires</taxon>
        <taxon>Glires</taxon>
        <taxon>Rodentia</taxon>
        <taxon>Myomorpha</taxon>
        <taxon>Muroidea</taxon>
        <taxon>Spalacidae</taxon>
        <taxon>Spalacinae</taxon>
        <taxon>Nannospalax</taxon>
    </lineage>
</organism>
<dbReference type="PIR" id="A02406">
    <property type="entry name" value="HBOL"/>
</dbReference>
<dbReference type="SMR" id="P02090"/>
<dbReference type="GO" id="GO:0072562">
    <property type="term" value="C:blood microparticle"/>
    <property type="evidence" value="ECO:0007669"/>
    <property type="project" value="TreeGrafter"/>
</dbReference>
<dbReference type="GO" id="GO:0031838">
    <property type="term" value="C:haptoglobin-hemoglobin complex"/>
    <property type="evidence" value="ECO:0007669"/>
    <property type="project" value="TreeGrafter"/>
</dbReference>
<dbReference type="GO" id="GO:0005833">
    <property type="term" value="C:hemoglobin complex"/>
    <property type="evidence" value="ECO:0007669"/>
    <property type="project" value="InterPro"/>
</dbReference>
<dbReference type="GO" id="GO:0031720">
    <property type="term" value="F:haptoglobin binding"/>
    <property type="evidence" value="ECO:0007669"/>
    <property type="project" value="TreeGrafter"/>
</dbReference>
<dbReference type="GO" id="GO:0020037">
    <property type="term" value="F:heme binding"/>
    <property type="evidence" value="ECO:0007669"/>
    <property type="project" value="InterPro"/>
</dbReference>
<dbReference type="GO" id="GO:0031721">
    <property type="term" value="F:hemoglobin alpha binding"/>
    <property type="evidence" value="ECO:0007669"/>
    <property type="project" value="TreeGrafter"/>
</dbReference>
<dbReference type="GO" id="GO:0046872">
    <property type="term" value="F:metal ion binding"/>
    <property type="evidence" value="ECO:0007669"/>
    <property type="project" value="UniProtKB-KW"/>
</dbReference>
<dbReference type="GO" id="GO:0043177">
    <property type="term" value="F:organic acid binding"/>
    <property type="evidence" value="ECO:0007669"/>
    <property type="project" value="TreeGrafter"/>
</dbReference>
<dbReference type="GO" id="GO:0019825">
    <property type="term" value="F:oxygen binding"/>
    <property type="evidence" value="ECO:0007669"/>
    <property type="project" value="InterPro"/>
</dbReference>
<dbReference type="GO" id="GO:0005344">
    <property type="term" value="F:oxygen carrier activity"/>
    <property type="evidence" value="ECO:0007669"/>
    <property type="project" value="UniProtKB-KW"/>
</dbReference>
<dbReference type="GO" id="GO:0004601">
    <property type="term" value="F:peroxidase activity"/>
    <property type="evidence" value="ECO:0007669"/>
    <property type="project" value="TreeGrafter"/>
</dbReference>
<dbReference type="GO" id="GO:0042744">
    <property type="term" value="P:hydrogen peroxide catabolic process"/>
    <property type="evidence" value="ECO:0007669"/>
    <property type="project" value="TreeGrafter"/>
</dbReference>
<dbReference type="CDD" id="cd08925">
    <property type="entry name" value="Hb-beta-like"/>
    <property type="match status" value="1"/>
</dbReference>
<dbReference type="FunFam" id="1.10.490.10:FF:000001">
    <property type="entry name" value="Hemoglobin subunit beta"/>
    <property type="match status" value="1"/>
</dbReference>
<dbReference type="Gene3D" id="1.10.490.10">
    <property type="entry name" value="Globins"/>
    <property type="match status" value="1"/>
</dbReference>
<dbReference type="InterPro" id="IPR000971">
    <property type="entry name" value="Globin"/>
</dbReference>
<dbReference type="InterPro" id="IPR009050">
    <property type="entry name" value="Globin-like_sf"/>
</dbReference>
<dbReference type="InterPro" id="IPR012292">
    <property type="entry name" value="Globin/Proto"/>
</dbReference>
<dbReference type="InterPro" id="IPR002337">
    <property type="entry name" value="Hemoglobin_b"/>
</dbReference>
<dbReference type="InterPro" id="IPR050056">
    <property type="entry name" value="Hemoglobin_oxygen_transport"/>
</dbReference>
<dbReference type="PANTHER" id="PTHR11442">
    <property type="entry name" value="HEMOGLOBIN FAMILY MEMBER"/>
    <property type="match status" value="1"/>
</dbReference>
<dbReference type="PANTHER" id="PTHR11442:SF42">
    <property type="entry name" value="HEMOGLOBIN SUBUNIT BETA"/>
    <property type="match status" value="1"/>
</dbReference>
<dbReference type="Pfam" id="PF00042">
    <property type="entry name" value="Globin"/>
    <property type="match status" value="1"/>
</dbReference>
<dbReference type="PRINTS" id="PR00814">
    <property type="entry name" value="BETAHAEM"/>
</dbReference>
<dbReference type="SUPFAM" id="SSF46458">
    <property type="entry name" value="Globin-like"/>
    <property type="match status" value="1"/>
</dbReference>
<dbReference type="PROSITE" id="PS01033">
    <property type="entry name" value="GLOBIN"/>
    <property type="match status" value="1"/>
</dbReference>